<reference key="1">
    <citation type="journal article" date="2003" name="Proc. Natl. Acad. Sci. U.S.A.">
        <title>The complete genome sequence of Mycobacterium bovis.</title>
        <authorList>
            <person name="Garnier T."/>
            <person name="Eiglmeier K."/>
            <person name="Camus J.-C."/>
            <person name="Medina N."/>
            <person name="Mansoor H."/>
            <person name="Pryor M."/>
            <person name="Duthoy S."/>
            <person name="Grondin S."/>
            <person name="Lacroix C."/>
            <person name="Monsempe C."/>
            <person name="Simon S."/>
            <person name="Harris B."/>
            <person name="Atkin R."/>
            <person name="Doggett J."/>
            <person name="Mayes R."/>
            <person name="Keating L."/>
            <person name="Wheeler P.R."/>
            <person name="Parkhill J."/>
            <person name="Barrell B.G."/>
            <person name="Cole S.T."/>
            <person name="Gordon S.V."/>
            <person name="Hewinson R.G."/>
        </authorList>
    </citation>
    <scope>NUCLEOTIDE SEQUENCE [LARGE SCALE GENOMIC DNA]</scope>
    <source>
        <strain>ATCC BAA-935 / AF2122/97</strain>
    </source>
</reference>
<reference key="2">
    <citation type="journal article" date="2017" name="Genome Announc.">
        <title>Updated reference genome sequence and annotation of Mycobacterium bovis AF2122/97.</title>
        <authorList>
            <person name="Malone K.M."/>
            <person name="Farrell D."/>
            <person name="Stuber T.P."/>
            <person name="Schubert O.T."/>
            <person name="Aebersold R."/>
            <person name="Robbe-Austerman S."/>
            <person name="Gordon S.V."/>
        </authorList>
    </citation>
    <scope>NUCLEOTIDE SEQUENCE [LARGE SCALE GENOMIC DNA]</scope>
    <scope>GENOME REANNOTATION</scope>
    <source>
        <strain>ATCC BAA-935 / AF2122/97</strain>
    </source>
</reference>
<keyword id="KW-0028">Amino-acid biosynthesis</keyword>
<keyword id="KW-0067">ATP-binding</keyword>
<keyword id="KW-0963">Cytoplasm</keyword>
<keyword id="KW-0418">Kinase</keyword>
<keyword id="KW-0547">Nucleotide-binding</keyword>
<keyword id="KW-0641">Proline biosynthesis</keyword>
<keyword id="KW-1185">Reference proteome</keyword>
<keyword id="KW-0808">Transferase</keyword>
<protein>
    <recommendedName>
        <fullName evidence="1">Glutamate 5-kinase</fullName>
        <ecNumber evidence="1">2.7.2.11</ecNumber>
    </recommendedName>
    <alternativeName>
        <fullName evidence="1">Gamma-glutamyl kinase</fullName>
        <shortName evidence="1">GK</shortName>
    </alternativeName>
</protein>
<comment type="function">
    <text evidence="1">Catalyzes the transfer of a phosphate group to glutamate to form L-glutamate 5-phosphate.</text>
</comment>
<comment type="catalytic activity">
    <reaction evidence="1">
        <text>L-glutamate + ATP = L-glutamyl 5-phosphate + ADP</text>
        <dbReference type="Rhea" id="RHEA:14877"/>
        <dbReference type="ChEBI" id="CHEBI:29985"/>
        <dbReference type="ChEBI" id="CHEBI:30616"/>
        <dbReference type="ChEBI" id="CHEBI:58274"/>
        <dbReference type="ChEBI" id="CHEBI:456216"/>
        <dbReference type="EC" id="2.7.2.11"/>
    </reaction>
</comment>
<comment type="pathway">
    <text evidence="1">Amino-acid biosynthesis; L-proline biosynthesis; L-glutamate 5-semialdehyde from L-glutamate: step 1/2.</text>
</comment>
<comment type="subcellular location">
    <subcellularLocation>
        <location evidence="1">Cytoplasm</location>
    </subcellularLocation>
</comment>
<comment type="similarity">
    <text evidence="1">Belongs to the glutamate 5-kinase family.</text>
</comment>
<name>PROB_MYCBO</name>
<proteinExistence type="inferred from homology"/>
<organism>
    <name type="scientific">Mycobacterium bovis (strain ATCC BAA-935 / AF2122/97)</name>
    <dbReference type="NCBI Taxonomy" id="233413"/>
    <lineage>
        <taxon>Bacteria</taxon>
        <taxon>Bacillati</taxon>
        <taxon>Actinomycetota</taxon>
        <taxon>Actinomycetes</taxon>
        <taxon>Mycobacteriales</taxon>
        <taxon>Mycobacteriaceae</taxon>
        <taxon>Mycobacterium</taxon>
        <taxon>Mycobacterium tuberculosis complex</taxon>
    </lineage>
</organism>
<accession>P59958</accession>
<accession>A0A1R3Y184</accession>
<accession>X2BKI0</accession>
<feature type="chain" id="PRO_0000109693" description="Glutamate 5-kinase">
    <location>
        <begin position="1"/>
        <end position="376"/>
    </location>
</feature>
<feature type="domain" description="PUA" evidence="1">
    <location>
        <begin position="280"/>
        <end position="358"/>
    </location>
</feature>
<feature type="binding site" evidence="1">
    <location>
        <position position="18"/>
    </location>
    <ligand>
        <name>ATP</name>
        <dbReference type="ChEBI" id="CHEBI:30616"/>
    </ligand>
</feature>
<feature type="binding site" evidence="1">
    <location>
        <position position="58"/>
    </location>
    <ligand>
        <name>substrate</name>
    </ligand>
</feature>
<feature type="binding site" evidence="1">
    <location>
        <position position="145"/>
    </location>
    <ligand>
        <name>substrate</name>
    </ligand>
</feature>
<feature type="binding site" evidence="1">
    <location>
        <position position="157"/>
    </location>
    <ligand>
        <name>substrate</name>
    </ligand>
</feature>
<feature type="binding site" evidence="1">
    <location>
        <begin position="177"/>
        <end position="178"/>
    </location>
    <ligand>
        <name>ATP</name>
        <dbReference type="ChEBI" id="CHEBI:30616"/>
    </ligand>
</feature>
<feature type="binding site" evidence="1">
    <location>
        <begin position="218"/>
        <end position="224"/>
    </location>
    <ligand>
        <name>ATP</name>
        <dbReference type="ChEBI" id="CHEBI:30616"/>
    </ligand>
</feature>
<sequence>MRSPHRDAIRTARGLVVKVGTTALTTPSGMFDAGRLAGLAEAVERRMKAGSDVVIVSSGAIAAGIEPLGLSRRPKDLATKQAAASVGQVALVNSWSAAFARYGRTVGQVLLTAHDISMRVQHTNAQRTLDRLRALHAVAIVNENDTVATNEIRFGDNDRLSALVAHLVGADALVLLSDIDGLYDCDPRKTADATFIPEVSGPADLDGVVAGRSSHLGTGGMASKVSAALLAADAGVPVLLAPAADAATALADASVGTVFAARPARLSARRFWVRYAAEATGALTLDAGAVRAVVRQRRSLLAAGITAVSGRFCGGDVVELRAPDAAMVARGVVAYDASELATMVGRSTSELPGELRRPVVHADDLVAVSAKQAKQV</sequence>
<evidence type="ECO:0000255" key="1">
    <source>
        <dbReference type="HAMAP-Rule" id="MF_00456"/>
    </source>
</evidence>
<gene>
    <name evidence="1" type="primary">proB</name>
    <name type="ordered locus">BQ2027_MB2466C</name>
</gene>
<dbReference type="EC" id="2.7.2.11" evidence="1"/>
<dbReference type="EMBL" id="LT708304">
    <property type="protein sequence ID" value="SIU01081.1"/>
    <property type="molecule type" value="Genomic_DNA"/>
</dbReference>
<dbReference type="RefSeq" id="NP_856113.1">
    <property type="nucleotide sequence ID" value="NC_002945.3"/>
</dbReference>
<dbReference type="RefSeq" id="WP_003412568.1">
    <property type="nucleotide sequence ID" value="NC_002945.4"/>
</dbReference>
<dbReference type="SMR" id="P59958"/>
<dbReference type="KEGG" id="mbo:BQ2027_MB2466C"/>
<dbReference type="PATRIC" id="fig|233413.5.peg.2714"/>
<dbReference type="UniPathway" id="UPA00098">
    <property type="reaction ID" value="UER00359"/>
</dbReference>
<dbReference type="Proteomes" id="UP000001419">
    <property type="component" value="Chromosome"/>
</dbReference>
<dbReference type="GO" id="GO:0005829">
    <property type="term" value="C:cytosol"/>
    <property type="evidence" value="ECO:0007669"/>
    <property type="project" value="TreeGrafter"/>
</dbReference>
<dbReference type="GO" id="GO:0005524">
    <property type="term" value="F:ATP binding"/>
    <property type="evidence" value="ECO:0007669"/>
    <property type="project" value="UniProtKB-KW"/>
</dbReference>
<dbReference type="GO" id="GO:0004349">
    <property type="term" value="F:glutamate 5-kinase activity"/>
    <property type="evidence" value="ECO:0007669"/>
    <property type="project" value="UniProtKB-UniRule"/>
</dbReference>
<dbReference type="GO" id="GO:0003723">
    <property type="term" value="F:RNA binding"/>
    <property type="evidence" value="ECO:0007669"/>
    <property type="project" value="InterPro"/>
</dbReference>
<dbReference type="GO" id="GO:0055129">
    <property type="term" value="P:L-proline biosynthetic process"/>
    <property type="evidence" value="ECO:0007669"/>
    <property type="project" value="UniProtKB-UniRule"/>
</dbReference>
<dbReference type="CDD" id="cd04242">
    <property type="entry name" value="AAK_G5K_ProB"/>
    <property type="match status" value="1"/>
</dbReference>
<dbReference type="CDD" id="cd21157">
    <property type="entry name" value="PUA_G5K"/>
    <property type="match status" value="1"/>
</dbReference>
<dbReference type="FunFam" id="3.40.1160.10:FF:000018">
    <property type="entry name" value="Glutamate 5-kinase"/>
    <property type="match status" value="1"/>
</dbReference>
<dbReference type="Gene3D" id="3.40.1160.10">
    <property type="entry name" value="Acetylglutamate kinase-like"/>
    <property type="match status" value="1"/>
</dbReference>
<dbReference type="Gene3D" id="2.30.130.10">
    <property type="entry name" value="PUA domain"/>
    <property type="match status" value="1"/>
</dbReference>
<dbReference type="HAMAP" id="MF_00456">
    <property type="entry name" value="ProB"/>
    <property type="match status" value="1"/>
</dbReference>
<dbReference type="InterPro" id="IPR036393">
    <property type="entry name" value="AceGlu_kinase-like_sf"/>
</dbReference>
<dbReference type="InterPro" id="IPR001048">
    <property type="entry name" value="Asp/Glu/Uridylate_kinase"/>
</dbReference>
<dbReference type="InterPro" id="IPR041739">
    <property type="entry name" value="G5K_ProB"/>
</dbReference>
<dbReference type="InterPro" id="IPR001057">
    <property type="entry name" value="Glu/AcGlu_kinase"/>
</dbReference>
<dbReference type="InterPro" id="IPR011529">
    <property type="entry name" value="Glu_5kinase"/>
</dbReference>
<dbReference type="InterPro" id="IPR005715">
    <property type="entry name" value="Glu_5kinase/COase_Synthase"/>
</dbReference>
<dbReference type="InterPro" id="IPR019797">
    <property type="entry name" value="Glutamate_5-kinase_CS"/>
</dbReference>
<dbReference type="InterPro" id="IPR002478">
    <property type="entry name" value="PUA"/>
</dbReference>
<dbReference type="InterPro" id="IPR015947">
    <property type="entry name" value="PUA-like_sf"/>
</dbReference>
<dbReference type="InterPro" id="IPR036974">
    <property type="entry name" value="PUA_sf"/>
</dbReference>
<dbReference type="NCBIfam" id="TIGR01027">
    <property type="entry name" value="proB"/>
    <property type="match status" value="1"/>
</dbReference>
<dbReference type="PANTHER" id="PTHR43654">
    <property type="entry name" value="GLUTAMATE 5-KINASE"/>
    <property type="match status" value="1"/>
</dbReference>
<dbReference type="PANTHER" id="PTHR43654:SF1">
    <property type="entry name" value="ISOPENTENYL PHOSPHATE KINASE"/>
    <property type="match status" value="1"/>
</dbReference>
<dbReference type="Pfam" id="PF00696">
    <property type="entry name" value="AA_kinase"/>
    <property type="match status" value="1"/>
</dbReference>
<dbReference type="Pfam" id="PF01472">
    <property type="entry name" value="PUA"/>
    <property type="match status" value="1"/>
</dbReference>
<dbReference type="PIRSF" id="PIRSF000729">
    <property type="entry name" value="GK"/>
    <property type="match status" value="1"/>
</dbReference>
<dbReference type="PRINTS" id="PR00474">
    <property type="entry name" value="GLU5KINASE"/>
</dbReference>
<dbReference type="SMART" id="SM00359">
    <property type="entry name" value="PUA"/>
    <property type="match status" value="1"/>
</dbReference>
<dbReference type="SUPFAM" id="SSF53633">
    <property type="entry name" value="Carbamate kinase-like"/>
    <property type="match status" value="1"/>
</dbReference>
<dbReference type="SUPFAM" id="SSF88697">
    <property type="entry name" value="PUA domain-like"/>
    <property type="match status" value="1"/>
</dbReference>
<dbReference type="PROSITE" id="PS00902">
    <property type="entry name" value="GLUTAMATE_5_KINASE"/>
    <property type="match status" value="1"/>
</dbReference>
<dbReference type="PROSITE" id="PS50890">
    <property type="entry name" value="PUA"/>
    <property type="match status" value="1"/>
</dbReference>